<evidence type="ECO:0000255" key="1">
    <source>
        <dbReference type="HAMAP-Rule" id="MF_01804"/>
    </source>
</evidence>
<protein>
    <recommendedName>
        <fullName evidence="1">Segregation and condensation protein B</fullName>
    </recommendedName>
</protein>
<sequence>MNYKAAIEAILFTMGESVELGRIADAIQLNEKETKKLLDELIKEYRSSSNIGMNIIELDGAYQMCTKPQMYEYLIRIAKQPKKRVLTDVLLETLSIIAYKQPVTKAEIEKIRGVSSEHAVSKLVEYNLVQELGRLDAPGRPLLFGTTEEFLRSFGVSSIDELPVLSPVQVEEFKQEAEEEMHVKLDV</sequence>
<organism>
    <name type="scientific">Agathobacter rectalis (strain ATCC 33656 / DSM 3377 / JCM 17463 / KCTC 5835 / VPI 0990)</name>
    <name type="common">Eubacterium rectale</name>
    <dbReference type="NCBI Taxonomy" id="515619"/>
    <lineage>
        <taxon>Bacteria</taxon>
        <taxon>Bacillati</taxon>
        <taxon>Bacillota</taxon>
        <taxon>Clostridia</taxon>
        <taxon>Lachnospirales</taxon>
        <taxon>Lachnospiraceae</taxon>
        <taxon>Agathobacter</taxon>
    </lineage>
</organism>
<feature type="chain" id="PRO_1000215942" description="Segregation and condensation protein B">
    <location>
        <begin position="1"/>
        <end position="187"/>
    </location>
</feature>
<name>SCPB_AGARV</name>
<accession>C4Z9E6</accession>
<dbReference type="EMBL" id="CP001107">
    <property type="protein sequence ID" value="ACR75368.1"/>
    <property type="molecule type" value="Genomic_DNA"/>
</dbReference>
<dbReference type="RefSeq" id="WP_012742466.1">
    <property type="nucleotide sequence ID" value="NC_012781.1"/>
</dbReference>
<dbReference type="SMR" id="C4Z9E6"/>
<dbReference type="STRING" id="515619.EUBREC_1624"/>
<dbReference type="PaxDb" id="515619-EUBREC_1624"/>
<dbReference type="GeneID" id="86988432"/>
<dbReference type="KEGG" id="ere:EUBREC_1624"/>
<dbReference type="HOGENOM" id="CLU_045647_5_3_9"/>
<dbReference type="Proteomes" id="UP000001477">
    <property type="component" value="Chromosome"/>
</dbReference>
<dbReference type="GO" id="GO:0005737">
    <property type="term" value="C:cytoplasm"/>
    <property type="evidence" value="ECO:0007669"/>
    <property type="project" value="UniProtKB-SubCell"/>
</dbReference>
<dbReference type="GO" id="GO:0051301">
    <property type="term" value="P:cell division"/>
    <property type="evidence" value="ECO:0007669"/>
    <property type="project" value="UniProtKB-KW"/>
</dbReference>
<dbReference type="GO" id="GO:0051304">
    <property type="term" value="P:chromosome separation"/>
    <property type="evidence" value="ECO:0007669"/>
    <property type="project" value="InterPro"/>
</dbReference>
<dbReference type="GO" id="GO:0006260">
    <property type="term" value="P:DNA replication"/>
    <property type="evidence" value="ECO:0007669"/>
    <property type="project" value="UniProtKB-UniRule"/>
</dbReference>
<dbReference type="Gene3D" id="1.10.10.10">
    <property type="entry name" value="Winged helix-like DNA-binding domain superfamily/Winged helix DNA-binding domain"/>
    <property type="match status" value="2"/>
</dbReference>
<dbReference type="HAMAP" id="MF_01804">
    <property type="entry name" value="ScpB"/>
    <property type="match status" value="1"/>
</dbReference>
<dbReference type="InterPro" id="IPR005234">
    <property type="entry name" value="ScpB_csome_segregation"/>
</dbReference>
<dbReference type="InterPro" id="IPR036388">
    <property type="entry name" value="WH-like_DNA-bd_sf"/>
</dbReference>
<dbReference type="InterPro" id="IPR036390">
    <property type="entry name" value="WH_DNA-bd_sf"/>
</dbReference>
<dbReference type="NCBIfam" id="TIGR00281">
    <property type="entry name" value="SMC-Scp complex subunit ScpB"/>
    <property type="match status" value="1"/>
</dbReference>
<dbReference type="PANTHER" id="PTHR34298">
    <property type="entry name" value="SEGREGATION AND CONDENSATION PROTEIN B"/>
    <property type="match status" value="1"/>
</dbReference>
<dbReference type="PANTHER" id="PTHR34298:SF2">
    <property type="entry name" value="SEGREGATION AND CONDENSATION PROTEIN B"/>
    <property type="match status" value="1"/>
</dbReference>
<dbReference type="Pfam" id="PF04079">
    <property type="entry name" value="SMC_ScpB"/>
    <property type="match status" value="1"/>
</dbReference>
<dbReference type="PIRSF" id="PIRSF019345">
    <property type="entry name" value="ScpB"/>
    <property type="match status" value="1"/>
</dbReference>
<dbReference type="SUPFAM" id="SSF46785">
    <property type="entry name" value="Winged helix' DNA-binding domain"/>
    <property type="match status" value="2"/>
</dbReference>
<comment type="function">
    <text evidence="1">Participates in chromosomal partition during cell division. May act via the formation of a condensin-like complex containing Smc and ScpA that pull DNA away from mid-cell into both cell halves.</text>
</comment>
<comment type="subunit">
    <text evidence="1">Homodimer. Homodimerization may be required to stabilize the binding of ScpA to the Smc head domains. Component of a cohesin-like complex composed of ScpA, ScpB and the Smc homodimer, in which ScpA and ScpB bind to the head domain of Smc. The presence of the three proteins is required for the association of the complex with DNA.</text>
</comment>
<comment type="subcellular location">
    <subcellularLocation>
        <location evidence="1">Cytoplasm</location>
    </subcellularLocation>
    <text evidence="1">Associated with two foci at the outer edges of the nucleoid region in young cells, and at four foci within both cell halves in older cells.</text>
</comment>
<comment type="similarity">
    <text evidence="1">Belongs to the ScpB family.</text>
</comment>
<reference key="1">
    <citation type="journal article" date="2009" name="Proc. Natl. Acad. Sci. U.S.A.">
        <title>Characterizing a model human gut microbiota composed of members of its two dominant bacterial phyla.</title>
        <authorList>
            <person name="Mahowald M.A."/>
            <person name="Rey F.E."/>
            <person name="Seedorf H."/>
            <person name="Turnbaugh P.J."/>
            <person name="Fulton R.S."/>
            <person name="Wollam A."/>
            <person name="Shah N."/>
            <person name="Wang C."/>
            <person name="Magrini V."/>
            <person name="Wilson R.K."/>
            <person name="Cantarel B.L."/>
            <person name="Coutinho P.M."/>
            <person name="Henrissat B."/>
            <person name="Crock L.W."/>
            <person name="Russell A."/>
            <person name="Verberkmoes N.C."/>
            <person name="Hettich R.L."/>
            <person name="Gordon J.I."/>
        </authorList>
    </citation>
    <scope>NUCLEOTIDE SEQUENCE [LARGE SCALE GENOMIC DNA]</scope>
    <source>
        <strain>ATCC 33656 / DSM 3377 / JCM 17463 / KCTC 5835 / LMG 30912 / VPI 0990</strain>
    </source>
</reference>
<proteinExistence type="inferred from homology"/>
<gene>
    <name evidence="1" type="primary">scpB</name>
    <name type="ordered locus">EUBREC_1624</name>
</gene>
<keyword id="KW-0131">Cell cycle</keyword>
<keyword id="KW-0132">Cell division</keyword>
<keyword id="KW-0159">Chromosome partition</keyword>
<keyword id="KW-0963">Cytoplasm</keyword>